<name>IAAS_WHEAT</name>
<evidence type="ECO:0000250" key="1"/>
<evidence type="ECO:0000305" key="2"/>
<reference key="1">
    <citation type="journal article" date="1986" name="Biochim. Biophys. Acta">
        <title>The complete amino-acid sequence of the endogenous alpha-amylase inhibitor in wheat.</title>
        <authorList>
            <person name="Maeda K."/>
        </authorList>
    </citation>
    <scope>PROTEIN SEQUENCE</scope>
</reference>
<feature type="chain" id="PRO_0000083322" description="Endogenous alpha-amylase/subtilisin inhibitor">
    <location>
        <begin position="1"/>
        <end position="180"/>
    </location>
</feature>
<feature type="site" description="Reactive bond" evidence="1">
    <location>
        <begin position="66"/>
        <end position="67"/>
    </location>
</feature>
<feature type="disulfide bond">
    <location>
        <begin position="42"/>
        <end position="89"/>
    </location>
</feature>
<feature type="disulfide bond">
    <location>
        <begin position="143"/>
        <end position="147"/>
    </location>
</feature>
<keyword id="KW-0022">Alpha-amylase inhibitor</keyword>
<keyword id="KW-0903">Direct protein sequencing</keyword>
<keyword id="KW-1015">Disulfide bond</keyword>
<keyword id="KW-0646">Protease inhibitor</keyword>
<keyword id="KW-1185">Reference proteome</keyword>
<keyword id="KW-0722">Serine protease inhibitor</keyword>
<comment type="function">
    <text>Inhibitor of endogenous alpha-amylase (wheat also produces an exogenous inhibitor which inactivates alpha-amylase from animal and insect origin). This inhibitor can also inhibit subtilisin.</text>
</comment>
<comment type="similarity">
    <text evidence="2">Belongs to the protease inhibitor I3 (leguminous Kunitz-type inhibitor) family.</text>
</comment>
<dbReference type="PIR" id="S38955">
    <property type="entry name" value="S38955"/>
</dbReference>
<dbReference type="SMR" id="P16347"/>
<dbReference type="STRING" id="4565.P16347"/>
<dbReference type="Allergome" id="9593">
    <property type="allergen name" value="Tri a aA_SI"/>
</dbReference>
<dbReference type="MEROPS" id="I03.004"/>
<dbReference type="PaxDb" id="4565-Traes_2BL_F26D3BB29.1"/>
<dbReference type="eggNOG" id="ENOG502S0PJ">
    <property type="taxonomic scope" value="Eukaryota"/>
</dbReference>
<dbReference type="Proteomes" id="UP000019116">
    <property type="component" value="Unplaced"/>
</dbReference>
<dbReference type="ExpressionAtlas" id="P16347">
    <property type="expression patterns" value="baseline and differential"/>
</dbReference>
<dbReference type="GO" id="GO:0015066">
    <property type="term" value="F:alpha-amylase inhibitor activity"/>
    <property type="evidence" value="ECO:0007669"/>
    <property type="project" value="UniProtKB-KW"/>
</dbReference>
<dbReference type="GO" id="GO:0004867">
    <property type="term" value="F:serine-type endopeptidase inhibitor activity"/>
    <property type="evidence" value="ECO:0007669"/>
    <property type="project" value="UniProtKB-KW"/>
</dbReference>
<dbReference type="CDD" id="cd23373">
    <property type="entry name" value="beta-trefoil_STI_ASI"/>
    <property type="match status" value="1"/>
</dbReference>
<dbReference type="Gene3D" id="2.80.10.50">
    <property type="match status" value="1"/>
</dbReference>
<dbReference type="InterPro" id="IPR011065">
    <property type="entry name" value="Kunitz_inhibitor_STI-like_sf"/>
</dbReference>
<dbReference type="InterPro" id="IPR002160">
    <property type="entry name" value="Prot_inh_Kunz-lg"/>
</dbReference>
<dbReference type="PANTHER" id="PTHR33107">
    <property type="entry name" value="KUNITZ TRYPSIN INHIBITOR 2"/>
    <property type="match status" value="1"/>
</dbReference>
<dbReference type="PANTHER" id="PTHR33107:SF5">
    <property type="entry name" value="KUNITZ TRYPSIN INHIBITOR 5"/>
    <property type="match status" value="1"/>
</dbReference>
<dbReference type="Pfam" id="PF00197">
    <property type="entry name" value="Kunitz_legume"/>
    <property type="match status" value="1"/>
</dbReference>
<dbReference type="PRINTS" id="PR00291">
    <property type="entry name" value="KUNITZINHBTR"/>
</dbReference>
<dbReference type="SMART" id="SM00452">
    <property type="entry name" value="STI"/>
    <property type="match status" value="1"/>
</dbReference>
<dbReference type="SUPFAM" id="SSF50386">
    <property type="entry name" value="STI-like"/>
    <property type="match status" value="1"/>
</dbReference>
<dbReference type="PROSITE" id="PS00283">
    <property type="entry name" value="SOYBEAN_KUNITZ"/>
    <property type="match status" value="1"/>
</dbReference>
<proteinExistence type="evidence at protein level"/>
<protein>
    <recommendedName>
        <fullName>Endogenous alpha-amylase/subtilisin inhibitor</fullName>
    </recommendedName>
    <alternativeName>
        <fullName>WASI</fullName>
    </alternativeName>
</protein>
<accession>P16347</accession>
<organism>
    <name type="scientific">Triticum aestivum</name>
    <name type="common">Wheat</name>
    <dbReference type="NCBI Taxonomy" id="4565"/>
    <lineage>
        <taxon>Eukaryota</taxon>
        <taxon>Viridiplantae</taxon>
        <taxon>Streptophyta</taxon>
        <taxon>Embryophyta</taxon>
        <taxon>Tracheophyta</taxon>
        <taxon>Spermatophyta</taxon>
        <taxon>Magnoliopsida</taxon>
        <taxon>Liliopsida</taxon>
        <taxon>Poales</taxon>
        <taxon>Poaceae</taxon>
        <taxon>BOP clade</taxon>
        <taxon>Pooideae</taxon>
        <taxon>Triticodae</taxon>
        <taxon>Triticeae</taxon>
        <taxon>Triticinae</taxon>
        <taxon>Triticum</taxon>
    </lineage>
</organism>
<sequence length="180" mass="19633">DPPPVHDTDGNELRADANYYVLPANRAHGGGLTMAPGHGRRCPLFVSQEADGQRDGLPVRIAPHGGAPSDKIIRLSTDVRISFRAYTTCVQSTEWHIDSELVSGRRHVITGPVRDPSPSGRENAFRIEKYSGAEVHEYKLMACGDSCQDLGVFRDLKGGAWFLGATEPYHVVVFKKAPPA</sequence>